<organism>
    <name type="scientific">Lawsonia intracellularis (strain PHE/MN1-00)</name>
    <dbReference type="NCBI Taxonomy" id="363253"/>
    <lineage>
        <taxon>Bacteria</taxon>
        <taxon>Pseudomonadati</taxon>
        <taxon>Thermodesulfobacteriota</taxon>
        <taxon>Desulfovibrionia</taxon>
        <taxon>Desulfovibrionales</taxon>
        <taxon>Desulfovibrionaceae</taxon>
        <taxon>Lawsonia</taxon>
    </lineage>
</organism>
<gene>
    <name evidence="1" type="primary">murG</name>
    <name type="ordered locus">LI1104</name>
</gene>
<dbReference type="EC" id="2.4.1.227" evidence="1"/>
<dbReference type="EMBL" id="AM180252">
    <property type="protein sequence ID" value="CAJ55158.1"/>
    <property type="molecule type" value="Genomic_DNA"/>
</dbReference>
<dbReference type="RefSeq" id="WP_011527187.1">
    <property type="nucleotide sequence ID" value="NC_008011.1"/>
</dbReference>
<dbReference type="SMR" id="Q1MPB9"/>
<dbReference type="STRING" id="363253.LI1104"/>
<dbReference type="CAZy" id="GT28">
    <property type="family name" value="Glycosyltransferase Family 28"/>
</dbReference>
<dbReference type="KEGG" id="lip:LI1104"/>
<dbReference type="eggNOG" id="COG0707">
    <property type="taxonomic scope" value="Bacteria"/>
</dbReference>
<dbReference type="HOGENOM" id="CLU_037404_2_0_7"/>
<dbReference type="OrthoDB" id="9808936at2"/>
<dbReference type="UniPathway" id="UPA00219"/>
<dbReference type="Proteomes" id="UP000002430">
    <property type="component" value="Chromosome"/>
</dbReference>
<dbReference type="GO" id="GO:0005886">
    <property type="term" value="C:plasma membrane"/>
    <property type="evidence" value="ECO:0007669"/>
    <property type="project" value="UniProtKB-SubCell"/>
</dbReference>
<dbReference type="GO" id="GO:0051991">
    <property type="term" value="F:UDP-N-acetyl-D-glucosamine:N-acetylmuramoyl-L-alanyl-D-glutamyl-meso-2,6-diaminopimelyl-D-alanyl-D-alanine-diphosphoundecaprenol 4-beta-N-acetylglucosaminlytransferase activity"/>
    <property type="evidence" value="ECO:0007669"/>
    <property type="project" value="RHEA"/>
</dbReference>
<dbReference type="GO" id="GO:0050511">
    <property type="term" value="F:undecaprenyldiphospho-muramoylpentapeptide beta-N-acetylglucosaminyltransferase activity"/>
    <property type="evidence" value="ECO:0007669"/>
    <property type="project" value="UniProtKB-UniRule"/>
</dbReference>
<dbReference type="GO" id="GO:0005975">
    <property type="term" value="P:carbohydrate metabolic process"/>
    <property type="evidence" value="ECO:0007669"/>
    <property type="project" value="InterPro"/>
</dbReference>
<dbReference type="GO" id="GO:0051301">
    <property type="term" value="P:cell division"/>
    <property type="evidence" value="ECO:0007669"/>
    <property type="project" value="UniProtKB-KW"/>
</dbReference>
<dbReference type="GO" id="GO:0071555">
    <property type="term" value="P:cell wall organization"/>
    <property type="evidence" value="ECO:0007669"/>
    <property type="project" value="UniProtKB-KW"/>
</dbReference>
<dbReference type="GO" id="GO:0030259">
    <property type="term" value="P:lipid glycosylation"/>
    <property type="evidence" value="ECO:0007669"/>
    <property type="project" value="UniProtKB-UniRule"/>
</dbReference>
<dbReference type="GO" id="GO:0009252">
    <property type="term" value="P:peptidoglycan biosynthetic process"/>
    <property type="evidence" value="ECO:0007669"/>
    <property type="project" value="UniProtKB-UniRule"/>
</dbReference>
<dbReference type="GO" id="GO:0008360">
    <property type="term" value="P:regulation of cell shape"/>
    <property type="evidence" value="ECO:0007669"/>
    <property type="project" value="UniProtKB-KW"/>
</dbReference>
<dbReference type="CDD" id="cd03785">
    <property type="entry name" value="GT28_MurG"/>
    <property type="match status" value="1"/>
</dbReference>
<dbReference type="Gene3D" id="3.40.50.2000">
    <property type="entry name" value="Glycogen Phosphorylase B"/>
    <property type="match status" value="2"/>
</dbReference>
<dbReference type="HAMAP" id="MF_00033">
    <property type="entry name" value="MurG"/>
    <property type="match status" value="1"/>
</dbReference>
<dbReference type="InterPro" id="IPR006009">
    <property type="entry name" value="GlcNAc_MurG"/>
</dbReference>
<dbReference type="InterPro" id="IPR007235">
    <property type="entry name" value="Glyco_trans_28_C"/>
</dbReference>
<dbReference type="InterPro" id="IPR004276">
    <property type="entry name" value="GlycoTrans_28_N"/>
</dbReference>
<dbReference type="NCBIfam" id="TIGR01133">
    <property type="entry name" value="murG"/>
    <property type="match status" value="1"/>
</dbReference>
<dbReference type="PANTHER" id="PTHR21015:SF22">
    <property type="entry name" value="GLYCOSYLTRANSFERASE"/>
    <property type="match status" value="1"/>
</dbReference>
<dbReference type="PANTHER" id="PTHR21015">
    <property type="entry name" value="UDP-N-ACETYLGLUCOSAMINE--N-ACETYLMURAMYL-(PENTAPEPTIDE) PYROPHOSPHORYL-UNDECAPRENOL N-ACETYLGLUCOSAMINE TRANSFERASE 1"/>
    <property type="match status" value="1"/>
</dbReference>
<dbReference type="Pfam" id="PF04101">
    <property type="entry name" value="Glyco_tran_28_C"/>
    <property type="match status" value="1"/>
</dbReference>
<dbReference type="Pfam" id="PF03033">
    <property type="entry name" value="Glyco_transf_28"/>
    <property type="match status" value="1"/>
</dbReference>
<dbReference type="SUPFAM" id="SSF53756">
    <property type="entry name" value="UDP-Glycosyltransferase/glycogen phosphorylase"/>
    <property type="match status" value="1"/>
</dbReference>
<keyword id="KW-0131">Cell cycle</keyword>
<keyword id="KW-0132">Cell division</keyword>
<keyword id="KW-1003">Cell membrane</keyword>
<keyword id="KW-0133">Cell shape</keyword>
<keyword id="KW-0961">Cell wall biogenesis/degradation</keyword>
<keyword id="KW-0328">Glycosyltransferase</keyword>
<keyword id="KW-0472">Membrane</keyword>
<keyword id="KW-0573">Peptidoglycan synthesis</keyword>
<keyword id="KW-1185">Reference proteome</keyword>
<keyword id="KW-0808">Transferase</keyword>
<protein>
    <recommendedName>
        <fullName evidence="1">UDP-N-acetylglucosamine--N-acetylmuramyl-(pentapeptide) pyrophosphoryl-undecaprenol N-acetylglucosamine transferase</fullName>
        <ecNumber evidence="1">2.4.1.227</ecNumber>
    </recommendedName>
    <alternativeName>
        <fullName evidence="1">Undecaprenyl-PP-MurNAc-pentapeptide-UDPGlcNAc GlcNAc transferase</fullName>
    </alternativeName>
</protein>
<name>MURG_LAWIP</name>
<accession>Q1MPB9</accession>
<feature type="chain" id="PRO_0000315106" description="UDP-N-acetylglucosamine--N-acetylmuramyl-(pentapeptide) pyrophosphoryl-undecaprenol N-acetylglucosamine transferase">
    <location>
        <begin position="1"/>
        <end position="363"/>
    </location>
</feature>
<feature type="binding site" evidence="1">
    <location>
        <begin position="12"/>
        <end position="14"/>
    </location>
    <ligand>
        <name>UDP-N-acetyl-alpha-D-glucosamine</name>
        <dbReference type="ChEBI" id="CHEBI:57705"/>
    </ligand>
</feature>
<feature type="binding site" evidence="1">
    <location>
        <position position="122"/>
    </location>
    <ligand>
        <name>UDP-N-acetyl-alpha-D-glucosamine</name>
        <dbReference type="ChEBI" id="CHEBI:57705"/>
    </ligand>
</feature>
<feature type="binding site" evidence="1">
    <location>
        <position position="164"/>
    </location>
    <ligand>
        <name>UDP-N-acetyl-alpha-D-glucosamine</name>
        <dbReference type="ChEBI" id="CHEBI:57705"/>
    </ligand>
</feature>
<feature type="binding site" evidence="1">
    <location>
        <position position="191"/>
    </location>
    <ligand>
        <name>UDP-N-acetyl-alpha-D-glucosamine</name>
        <dbReference type="ChEBI" id="CHEBI:57705"/>
    </ligand>
</feature>
<feature type="binding site" evidence="1">
    <location>
        <position position="245"/>
    </location>
    <ligand>
        <name>UDP-N-acetyl-alpha-D-glucosamine</name>
        <dbReference type="ChEBI" id="CHEBI:57705"/>
    </ligand>
</feature>
<feature type="binding site" evidence="1">
    <location>
        <position position="290"/>
    </location>
    <ligand>
        <name>UDP-N-acetyl-alpha-D-glucosamine</name>
        <dbReference type="ChEBI" id="CHEBI:57705"/>
    </ligand>
</feature>
<reference key="1">
    <citation type="submission" date="2005-11" db="EMBL/GenBank/DDBJ databases">
        <title>The complete genome sequence of Lawsonia intracellularis: the causative agent of proliferative enteropathy.</title>
        <authorList>
            <person name="Kaur K."/>
            <person name="Zhang Q."/>
            <person name="Beckler D."/>
            <person name="Munir S."/>
            <person name="Li L."/>
            <person name="Kinsley K."/>
            <person name="Herron L."/>
            <person name="Peterson A."/>
            <person name="May B."/>
            <person name="Singh S."/>
            <person name="Gebhart C."/>
            <person name="Kapur V."/>
        </authorList>
    </citation>
    <scope>NUCLEOTIDE SEQUENCE [LARGE SCALE GENOMIC DNA]</scope>
    <source>
        <strain>PHE/MN1-00</strain>
    </source>
</reference>
<proteinExistence type="inferred from homology"/>
<sequence length="363" mass="40074">MKYRIAITTGGTGGHVYPALAVAEQFHDKADLFFIGSQYGPEAEMVKTFNIPFYGLPVRGVLGRKWKAFSALYSMIKAIVKARKILQKCMPDIVVGFGSYASFAPLVAAKLKRIPTAIHEQNVRPGLANRMLARLADRVFLSVPDTLHIFTKKSKVRYTGNPIRQSIVDLHYKFEDTKNSSTRHLLVLGGSLGAIAINSIVVDGLSRLFSNRIVIRHQTGVHDWERVKEGYALYGRTNSQVTPFIDDMAEAYQWSDLVLCRAGATTIAELAAVGKPSILIPFPYATHDHQTYNAQFLVRVGAAVLIPEKNVVEVDVIEKIIALFNDRVTLVNMALAAHKHGRIDAATCVANEIIDLLSANAMK</sequence>
<comment type="function">
    <text evidence="1">Cell wall formation. Catalyzes the transfer of a GlcNAc subunit on undecaprenyl-pyrophosphoryl-MurNAc-pentapeptide (lipid intermediate I) to form undecaprenyl-pyrophosphoryl-MurNAc-(pentapeptide)GlcNAc (lipid intermediate II).</text>
</comment>
<comment type="catalytic activity">
    <reaction evidence="1">
        <text>di-trans,octa-cis-undecaprenyl diphospho-N-acetyl-alpha-D-muramoyl-L-alanyl-D-glutamyl-meso-2,6-diaminopimeloyl-D-alanyl-D-alanine + UDP-N-acetyl-alpha-D-glucosamine = di-trans,octa-cis-undecaprenyl diphospho-[N-acetyl-alpha-D-glucosaminyl-(1-&gt;4)]-N-acetyl-alpha-D-muramoyl-L-alanyl-D-glutamyl-meso-2,6-diaminopimeloyl-D-alanyl-D-alanine + UDP + H(+)</text>
        <dbReference type="Rhea" id="RHEA:31227"/>
        <dbReference type="ChEBI" id="CHEBI:15378"/>
        <dbReference type="ChEBI" id="CHEBI:57705"/>
        <dbReference type="ChEBI" id="CHEBI:58223"/>
        <dbReference type="ChEBI" id="CHEBI:61387"/>
        <dbReference type="ChEBI" id="CHEBI:61388"/>
        <dbReference type="EC" id="2.4.1.227"/>
    </reaction>
</comment>
<comment type="pathway">
    <text evidence="1">Cell wall biogenesis; peptidoglycan biosynthesis.</text>
</comment>
<comment type="subcellular location">
    <subcellularLocation>
        <location evidence="1">Cell membrane</location>
        <topology evidence="1">Peripheral membrane protein</topology>
        <orientation evidence="1">Cytoplasmic side</orientation>
    </subcellularLocation>
</comment>
<comment type="similarity">
    <text evidence="1">Belongs to the glycosyltransferase 28 family. MurG subfamily.</text>
</comment>
<evidence type="ECO:0000255" key="1">
    <source>
        <dbReference type="HAMAP-Rule" id="MF_00033"/>
    </source>
</evidence>